<sequence length="411" mass="42984">MFHPRARTMLLLSLPALIIGVASSLVLIAAMKVASVFQQFLWQRLPTSIGIAYDSPFWIVGMLTLTGIVVGLIIRYSPGHAGPDPAIEPLISMPVSPSALPGLLLALIIGLAGGVSLGPEHPIMTINIALAAAFGSRLFPRITALDWTILASAGTIGALFGTPVAAALIFSQTLSGSNDIPMWDRLFAPLMAAAAGSLTTSLFFHPHFSLPIAHYTQMRLVDIASGAIVAAIAIAAGMVAVWCLPRLHELLHRLKNPVLILGIGGFILGILGVIGGPLTLFKGLDEMQQMAFSQTLGAGDYFTLAVVKLAALVIAAASGFRGGRIFPAVFIGAALGLMLHAHVEAVPAAITVSCAILGLVLVVTRDGWLSLFMAAVVVPDTNLLPLLCIVMLPAWLLLAGKPLLAANRHEP</sequence>
<gene>
    <name evidence="1" type="primary">yfeO</name>
    <name type="ordered locus">SEN2390</name>
</gene>
<dbReference type="EMBL" id="AM933172">
    <property type="protein sequence ID" value="CAR33976.1"/>
    <property type="molecule type" value="Genomic_DNA"/>
</dbReference>
<dbReference type="RefSeq" id="WP_000468920.1">
    <property type="nucleotide sequence ID" value="NC_011294.1"/>
</dbReference>
<dbReference type="SMR" id="B5R3T7"/>
<dbReference type="KEGG" id="set:SEN2390"/>
<dbReference type="HOGENOM" id="CLU_053130_0_0_6"/>
<dbReference type="Proteomes" id="UP000000613">
    <property type="component" value="Chromosome"/>
</dbReference>
<dbReference type="GO" id="GO:0005886">
    <property type="term" value="C:plasma membrane"/>
    <property type="evidence" value="ECO:0007669"/>
    <property type="project" value="UniProtKB-SubCell"/>
</dbReference>
<dbReference type="GO" id="GO:0015108">
    <property type="term" value="F:chloride transmembrane transporter activity"/>
    <property type="evidence" value="ECO:0007669"/>
    <property type="project" value="InterPro"/>
</dbReference>
<dbReference type="GO" id="GO:0005216">
    <property type="term" value="F:monoatomic ion channel activity"/>
    <property type="evidence" value="ECO:0007669"/>
    <property type="project" value="UniProtKB-UniRule"/>
</dbReference>
<dbReference type="CDD" id="cd00400">
    <property type="entry name" value="Voltage_gated_ClC"/>
    <property type="match status" value="1"/>
</dbReference>
<dbReference type="FunFam" id="1.10.3080.10:FF:000007">
    <property type="entry name" value="Putative ion-transport protein YfeO"/>
    <property type="match status" value="1"/>
</dbReference>
<dbReference type="Gene3D" id="1.10.3080.10">
    <property type="entry name" value="Clc chloride channel"/>
    <property type="match status" value="1"/>
</dbReference>
<dbReference type="HAMAP" id="MF_01115">
    <property type="entry name" value="CLC_YfeO"/>
    <property type="match status" value="1"/>
</dbReference>
<dbReference type="InterPro" id="IPR022969">
    <property type="entry name" value="Chloride_channel_YfeO"/>
</dbReference>
<dbReference type="InterPro" id="IPR014743">
    <property type="entry name" value="Cl-channel_core"/>
</dbReference>
<dbReference type="InterPro" id="IPR001807">
    <property type="entry name" value="ClC"/>
</dbReference>
<dbReference type="InterPro" id="IPR050368">
    <property type="entry name" value="ClC-type_chloride_channel"/>
</dbReference>
<dbReference type="NCBIfam" id="NF002971">
    <property type="entry name" value="PRK03655.1"/>
    <property type="match status" value="1"/>
</dbReference>
<dbReference type="PANTHER" id="PTHR43427">
    <property type="entry name" value="CHLORIDE CHANNEL PROTEIN CLC-E"/>
    <property type="match status" value="1"/>
</dbReference>
<dbReference type="PANTHER" id="PTHR43427:SF9">
    <property type="entry name" value="ION-TRANSPORT PROTEIN YFEO-RELATED"/>
    <property type="match status" value="1"/>
</dbReference>
<dbReference type="Pfam" id="PF00654">
    <property type="entry name" value="Voltage_CLC"/>
    <property type="match status" value="1"/>
</dbReference>
<dbReference type="PRINTS" id="PR00762">
    <property type="entry name" value="CLCHANNEL"/>
</dbReference>
<dbReference type="SUPFAM" id="SSF81340">
    <property type="entry name" value="Clc chloride channel"/>
    <property type="match status" value="1"/>
</dbReference>
<protein>
    <recommendedName>
        <fullName evidence="1">Putative ion-transport protein YfeO</fullName>
    </recommendedName>
</protein>
<accession>B5R3T7</accession>
<keyword id="KW-1003">Cell membrane</keyword>
<keyword id="KW-0407">Ion channel</keyword>
<keyword id="KW-0406">Ion transport</keyword>
<keyword id="KW-0472">Membrane</keyword>
<keyword id="KW-0812">Transmembrane</keyword>
<keyword id="KW-1133">Transmembrane helix</keyword>
<keyword id="KW-0813">Transport</keyword>
<feature type="chain" id="PRO_1000137218" description="Putative ion-transport protein YfeO">
    <location>
        <begin position="1"/>
        <end position="411"/>
    </location>
</feature>
<feature type="transmembrane region" description="Helical" evidence="1">
    <location>
        <begin position="9"/>
        <end position="29"/>
    </location>
</feature>
<feature type="transmembrane region" description="Helical" evidence="1">
    <location>
        <begin position="54"/>
        <end position="74"/>
    </location>
</feature>
<feature type="transmembrane region" description="Helical" evidence="1">
    <location>
        <begin position="99"/>
        <end position="119"/>
    </location>
</feature>
<feature type="transmembrane region" description="Helical" evidence="1">
    <location>
        <begin position="149"/>
        <end position="169"/>
    </location>
</feature>
<feature type="transmembrane region" description="Helical" evidence="1">
    <location>
        <begin position="186"/>
        <end position="206"/>
    </location>
</feature>
<feature type="transmembrane region" description="Helical" evidence="1">
    <location>
        <begin position="223"/>
        <end position="243"/>
    </location>
</feature>
<feature type="transmembrane region" description="Helical" evidence="1">
    <location>
        <begin position="258"/>
        <end position="278"/>
    </location>
</feature>
<feature type="transmembrane region" description="Helical" evidence="1">
    <location>
        <begin position="296"/>
        <end position="316"/>
    </location>
</feature>
<feature type="transmembrane region" description="Helical" evidence="1">
    <location>
        <begin position="322"/>
        <end position="342"/>
    </location>
</feature>
<feature type="transmembrane region" description="Helical" evidence="1">
    <location>
        <begin position="343"/>
        <end position="363"/>
    </location>
</feature>
<feature type="transmembrane region" description="Helical" evidence="1">
    <location>
        <begin position="386"/>
        <end position="406"/>
    </location>
</feature>
<name>YFEO_SALEP</name>
<organism>
    <name type="scientific">Salmonella enteritidis PT4 (strain P125109)</name>
    <dbReference type="NCBI Taxonomy" id="550537"/>
    <lineage>
        <taxon>Bacteria</taxon>
        <taxon>Pseudomonadati</taxon>
        <taxon>Pseudomonadota</taxon>
        <taxon>Gammaproteobacteria</taxon>
        <taxon>Enterobacterales</taxon>
        <taxon>Enterobacteriaceae</taxon>
        <taxon>Salmonella</taxon>
    </lineage>
</organism>
<evidence type="ECO:0000255" key="1">
    <source>
        <dbReference type="HAMAP-Rule" id="MF_01115"/>
    </source>
</evidence>
<reference key="1">
    <citation type="journal article" date="2008" name="Genome Res.">
        <title>Comparative genome analysis of Salmonella enteritidis PT4 and Salmonella gallinarum 287/91 provides insights into evolutionary and host adaptation pathways.</title>
        <authorList>
            <person name="Thomson N.R."/>
            <person name="Clayton D.J."/>
            <person name="Windhorst D."/>
            <person name="Vernikos G."/>
            <person name="Davidson S."/>
            <person name="Churcher C."/>
            <person name="Quail M.A."/>
            <person name="Stevens M."/>
            <person name="Jones M.A."/>
            <person name="Watson M."/>
            <person name="Barron A."/>
            <person name="Layton A."/>
            <person name="Pickard D."/>
            <person name="Kingsley R.A."/>
            <person name="Bignell A."/>
            <person name="Clark L."/>
            <person name="Harris B."/>
            <person name="Ormond D."/>
            <person name="Abdellah Z."/>
            <person name="Brooks K."/>
            <person name="Cherevach I."/>
            <person name="Chillingworth T."/>
            <person name="Woodward J."/>
            <person name="Norberczak H."/>
            <person name="Lord A."/>
            <person name="Arrowsmith C."/>
            <person name="Jagels K."/>
            <person name="Moule S."/>
            <person name="Mungall K."/>
            <person name="Saunders M."/>
            <person name="Whitehead S."/>
            <person name="Chabalgoity J.A."/>
            <person name="Maskell D."/>
            <person name="Humphreys T."/>
            <person name="Roberts M."/>
            <person name="Barrow P.A."/>
            <person name="Dougan G."/>
            <person name="Parkhill J."/>
        </authorList>
    </citation>
    <scope>NUCLEOTIDE SEQUENCE [LARGE SCALE GENOMIC DNA]</scope>
    <source>
        <strain>P125109</strain>
    </source>
</reference>
<proteinExistence type="inferred from homology"/>
<comment type="subcellular location">
    <subcellularLocation>
        <location evidence="1">Cell membrane</location>
        <topology evidence="1">Multi-pass membrane protein</topology>
    </subcellularLocation>
</comment>
<comment type="similarity">
    <text evidence="1">Belongs to the chloride channel (TC 2.A.49) family.</text>
</comment>